<accession>B8I4B5</accession>
<feature type="chain" id="PRO_1000196235" description="Large ribosomal subunit protein bL9">
    <location>
        <begin position="1"/>
        <end position="148"/>
    </location>
</feature>
<evidence type="ECO:0000255" key="1">
    <source>
        <dbReference type="HAMAP-Rule" id="MF_00503"/>
    </source>
</evidence>
<evidence type="ECO:0000305" key="2"/>
<organism>
    <name type="scientific">Ruminiclostridium cellulolyticum (strain ATCC 35319 / DSM 5812 / JCM 6584 / H10)</name>
    <name type="common">Clostridium cellulolyticum</name>
    <dbReference type="NCBI Taxonomy" id="394503"/>
    <lineage>
        <taxon>Bacteria</taxon>
        <taxon>Bacillati</taxon>
        <taxon>Bacillota</taxon>
        <taxon>Clostridia</taxon>
        <taxon>Eubacteriales</taxon>
        <taxon>Oscillospiraceae</taxon>
        <taxon>Ruminiclostridium</taxon>
    </lineage>
</organism>
<protein>
    <recommendedName>
        <fullName evidence="1">Large ribosomal subunit protein bL9</fullName>
    </recommendedName>
    <alternativeName>
        <fullName evidence="2">50S ribosomal protein L9</fullName>
    </alternativeName>
</protein>
<reference key="1">
    <citation type="submission" date="2009-01" db="EMBL/GenBank/DDBJ databases">
        <title>Complete sequence of Clostridium cellulolyticum H10.</title>
        <authorList>
            <consortium name="US DOE Joint Genome Institute"/>
            <person name="Lucas S."/>
            <person name="Copeland A."/>
            <person name="Lapidus A."/>
            <person name="Glavina del Rio T."/>
            <person name="Dalin E."/>
            <person name="Tice H."/>
            <person name="Bruce D."/>
            <person name="Goodwin L."/>
            <person name="Pitluck S."/>
            <person name="Chertkov O."/>
            <person name="Saunders E."/>
            <person name="Brettin T."/>
            <person name="Detter J.C."/>
            <person name="Han C."/>
            <person name="Larimer F."/>
            <person name="Land M."/>
            <person name="Hauser L."/>
            <person name="Kyrpides N."/>
            <person name="Ivanova N."/>
            <person name="Zhou J."/>
            <person name="Richardson P."/>
        </authorList>
    </citation>
    <scope>NUCLEOTIDE SEQUENCE [LARGE SCALE GENOMIC DNA]</scope>
    <source>
        <strain>ATCC 35319 / DSM 5812 / JCM 6584 / H10</strain>
    </source>
</reference>
<comment type="function">
    <text evidence="1">Binds to the 23S rRNA.</text>
</comment>
<comment type="similarity">
    <text evidence="1">Belongs to the bacterial ribosomal protein bL9 family.</text>
</comment>
<dbReference type="EMBL" id="CP001348">
    <property type="protein sequence ID" value="ACL74469.1"/>
    <property type="molecule type" value="Genomic_DNA"/>
</dbReference>
<dbReference type="RefSeq" id="WP_012634535.1">
    <property type="nucleotide sequence ID" value="NC_011898.1"/>
</dbReference>
<dbReference type="SMR" id="B8I4B5"/>
<dbReference type="STRING" id="394503.Ccel_0081"/>
<dbReference type="KEGG" id="cce:Ccel_0081"/>
<dbReference type="eggNOG" id="COG0359">
    <property type="taxonomic scope" value="Bacteria"/>
</dbReference>
<dbReference type="HOGENOM" id="CLU_078938_3_0_9"/>
<dbReference type="OrthoDB" id="9788336at2"/>
<dbReference type="Proteomes" id="UP000001349">
    <property type="component" value="Chromosome"/>
</dbReference>
<dbReference type="GO" id="GO:1990904">
    <property type="term" value="C:ribonucleoprotein complex"/>
    <property type="evidence" value="ECO:0007669"/>
    <property type="project" value="UniProtKB-KW"/>
</dbReference>
<dbReference type="GO" id="GO:0005840">
    <property type="term" value="C:ribosome"/>
    <property type="evidence" value="ECO:0007669"/>
    <property type="project" value="UniProtKB-KW"/>
</dbReference>
<dbReference type="GO" id="GO:0019843">
    <property type="term" value="F:rRNA binding"/>
    <property type="evidence" value="ECO:0007669"/>
    <property type="project" value="UniProtKB-UniRule"/>
</dbReference>
<dbReference type="GO" id="GO:0003735">
    <property type="term" value="F:structural constituent of ribosome"/>
    <property type="evidence" value="ECO:0007669"/>
    <property type="project" value="InterPro"/>
</dbReference>
<dbReference type="GO" id="GO:0006412">
    <property type="term" value="P:translation"/>
    <property type="evidence" value="ECO:0007669"/>
    <property type="project" value="UniProtKB-UniRule"/>
</dbReference>
<dbReference type="Gene3D" id="3.10.430.100">
    <property type="entry name" value="Ribosomal protein L9, C-terminal domain"/>
    <property type="match status" value="1"/>
</dbReference>
<dbReference type="Gene3D" id="3.40.5.10">
    <property type="entry name" value="Ribosomal protein L9, N-terminal domain"/>
    <property type="match status" value="1"/>
</dbReference>
<dbReference type="HAMAP" id="MF_00503">
    <property type="entry name" value="Ribosomal_bL9"/>
    <property type="match status" value="1"/>
</dbReference>
<dbReference type="InterPro" id="IPR000244">
    <property type="entry name" value="Ribosomal_bL9"/>
</dbReference>
<dbReference type="InterPro" id="IPR009027">
    <property type="entry name" value="Ribosomal_bL9/RNase_H1_N"/>
</dbReference>
<dbReference type="InterPro" id="IPR020594">
    <property type="entry name" value="Ribosomal_bL9_bac/chp"/>
</dbReference>
<dbReference type="InterPro" id="IPR020069">
    <property type="entry name" value="Ribosomal_bL9_C"/>
</dbReference>
<dbReference type="InterPro" id="IPR036791">
    <property type="entry name" value="Ribosomal_bL9_C_sf"/>
</dbReference>
<dbReference type="InterPro" id="IPR020070">
    <property type="entry name" value="Ribosomal_bL9_N"/>
</dbReference>
<dbReference type="InterPro" id="IPR036935">
    <property type="entry name" value="Ribosomal_bL9_N_sf"/>
</dbReference>
<dbReference type="NCBIfam" id="TIGR00158">
    <property type="entry name" value="L9"/>
    <property type="match status" value="1"/>
</dbReference>
<dbReference type="PANTHER" id="PTHR21368">
    <property type="entry name" value="50S RIBOSOMAL PROTEIN L9"/>
    <property type="match status" value="1"/>
</dbReference>
<dbReference type="Pfam" id="PF03948">
    <property type="entry name" value="Ribosomal_L9_C"/>
    <property type="match status" value="1"/>
</dbReference>
<dbReference type="Pfam" id="PF01281">
    <property type="entry name" value="Ribosomal_L9_N"/>
    <property type="match status" value="1"/>
</dbReference>
<dbReference type="SUPFAM" id="SSF55658">
    <property type="entry name" value="L9 N-domain-like"/>
    <property type="match status" value="1"/>
</dbReference>
<dbReference type="SUPFAM" id="SSF55653">
    <property type="entry name" value="Ribosomal protein L9 C-domain"/>
    <property type="match status" value="1"/>
</dbReference>
<sequence>MKVILKQDVKGLGKKEQMVEASDGYARNFLLPKGLAVEATSANVNIMKTKKEAEAQKKEREVAQAKELAKKIKDITVTLKVKAGENGKLFGSITSKDVAEALKTQQKLDIDKKKLVMPDSVKSIGTFDVEVKLYPEINSKFTVKIENL</sequence>
<gene>
    <name evidence="1" type="primary">rplI</name>
    <name type="ordered locus">Ccel_0081</name>
</gene>
<keyword id="KW-1185">Reference proteome</keyword>
<keyword id="KW-0687">Ribonucleoprotein</keyword>
<keyword id="KW-0689">Ribosomal protein</keyword>
<keyword id="KW-0694">RNA-binding</keyword>
<keyword id="KW-0699">rRNA-binding</keyword>
<proteinExistence type="inferred from homology"/>
<name>RL9_RUMCH</name>